<evidence type="ECO:0000250" key="1">
    <source>
        <dbReference type="UniProtKB" id="Q96HY7"/>
    </source>
</evidence>
<evidence type="ECO:0000255" key="2"/>
<evidence type="ECO:0000305" key="3"/>
<evidence type="ECO:0000312" key="4">
    <source>
        <dbReference type="Proteomes" id="UP000001940"/>
    </source>
</evidence>
<evidence type="ECO:0000312" key="5">
    <source>
        <dbReference type="WormBase" id="ZK836.2a"/>
    </source>
</evidence>
<comment type="function">
    <text evidence="1">2-oxoadipate dehydrogenase (E1a) component of the 2-oxoadipate dehydrogenase complex (OADHC). Participates in the first step, rate limiting for the overall conversion of 2-oxoadipate (alpha-ketoadipate) to glutaryl-CoA and CO(2) catalyzed by the whole OADHC. Catalyzes the irreversible decarboxylation of 2-oxoadipate via the thiamine diphosphate (ThDP) cofactor and subsequent transfer of the decarboxylated acyl intermediate on an oxidized dihydrolipoyl group that is covalently amidated to the E2 enzyme (dihydrolipoyllysine-residue succinyltransferase or DLST).</text>
</comment>
<comment type="catalytic activity">
    <reaction evidence="1">
        <text>N(6)-[(R)-lipoyl]-L-lysyl-[protein] + 2-oxoadipate + H(+) = N(6)-[(R)-S(8)-glutaryldihydrolipoyl]-L-lysyl-[protein] + CO2</text>
        <dbReference type="Rhea" id="RHEA:69576"/>
        <dbReference type="Rhea" id="RHEA-COMP:10474"/>
        <dbReference type="Rhea" id="RHEA-COMP:20093"/>
        <dbReference type="ChEBI" id="CHEBI:15378"/>
        <dbReference type="ChEBI" id="CHEBI:16526"/>
        <dbReference type="ChEBI" id="CHEBI:57499"/>
        <dbReference type="ChEBI" id="CHEBI:83099"/>
        <dbReference type="ChEBI" id="CHEBI:184385"/>
    </reaction>
    <physiologicalReaction direction="left-to-right" evidence="1">
        <dbReference type="Rhea" id="RHEA:69577"/>
    </physiologicalReaction>
</comment>
<comment type="cofactor">
    <cofactor evidence="1">
        <name>thiamine diphosphate</name>
        <dbReference type="ChEBI" id="CHEBI:58937"/>
    </cofactor>
</comment>
<comment type="subcellular location">
    <subcellularLocation>
        <location evidence="1">Mitochondrion</location>
    </subcellularLocation>
</comment>
<comment type="similarity">
    <text evidence="3">Belongs to the alpha-ketoglutarate dehydrogenase family.</text>
</comment>
<gene>
    <name evidence="5" type="primary">ogdh-2</name>
    <name evidence="5" type="ORF">ZK836.2</name>
</gene>
<accession>Q23629</accession>
<feature type="transit peptide" description="Mitochondrion" evidence="2">
    <location>
        <begin position="1"/>
        <end status="unknown"/>
    </location>
</feature>
<feature type="chain" id="PRO_0000307942" description="Probable 2-oxoadipate dehydrogenase complex component E1 homolog">
    <location>
        <begin status="unknown"/>
        <end position="911"/>
    </location>
</feature>
<proteinExistence type="inferred from homology"/>
<keyword id="KW-0324">Glycolysis</keyword>
<keyword id="KW-0496">Mitochondrion</keyword>
<keyword id="KW-0560">Oxidoreductase</keyword>
<keyword id="KW-1185">Reference proteome</keyword>
<keyword id="KW-0786">Thiamine pyrophosphate</keyword>
<keyword id="KW-0809">Transit peptide</keyword>
<sequence>MMLRSAGGSIRRAITQRQNQHRFYRPGHGVFGHLPDPPKRVFENQGGLTPENAQRVHLINAFRRYGYLEADLDPLGLRKVESVAELDPAIYGLSLDENVKGNFSLHDLAEQLRHIYCGPTAIEFMHINNWEERQWISQNFENCIAEELRKEELLRIGDLMLKCENFDKFLSTKFPTLKRYGAEGAESMFAFFSELFEGAAEKQVEEIIIGIAHRGRLNLLTQLMDFPPVHMFRKIKGRAEFPESADAAGDVLSHLVSSFDYKGSEGNVHVTMLPNPSHLEAVNPVAMGKARARAWSMNKGDYSPDERSARAGDSVLNVLVHGDGAFTGQGVVWESIALSQAPHFRLGGTVHLVTNNQIAFTAESSVGRSSTHCTDIAKAFEYPVIHVNGDHPEEVVKATRLALAYRERFRKDVFINLVCFRRWGHNELDDPTFTSPVMYKEVEARESVPRLFLDRLVEEGFTTEEAVKEQLQKHTEQLNNELKKVDSTVPIDISHRGRWEGFKQAPKAIESWDTGVATDLLRFIGAGSVKVPEDFDTHKHLYKMHIDSRMQKMQTGEGIDWATAEAMAFGSILLEGNDVRISGQDVGRGTFCHRHAMMVDQSTDHIHIPLNELVEEQKNQLEVANNLLSEEAILGFEWGFSSENPRRLCIWEAQFGDFFNGAQIIIDTFLASAESKWLTSSGLTMLLPHGFDGAGPEHSSCRMERFLQLCDSREDQTPVDGENVNMRVANPTTSAQYFHLLRRQVVPNYRKPLIVVGPKILLRHPKAASTINEFGPGTTYQNVISEEHATSSQKIKKVIFVSGKHWINVEKARDERGLKDSVAIVRVEMLCPFPVVDLQAVLKKYPGAQDFVWSQEEPRNAGAWSFVRPRFENALGVRLKFAGRPELAWTATAIGEHHTKEAEEVINQTFA</sequence>
<organism evidence="4">
    <name type="scientific">Caenorhabditis elegans</name>
    <dbReference type="NCBI Taxonomy" id="6239"/>
    <lineage>
        <taxon>Eukaryota</taxon>
        <taxon>Metazoa</taxon>
        <taxon>Ecdysozoa</taxon>
        <taxon>Nematoda</taxon>
        <taxon>Chromadorea</taxon>
        <taxon>Rhabditida</taxon>
        <taxon>Rhabditina</taxon>
        <taxon>Rhabditomorpha</taxon>
        <taxon>Rhabditoidea</taxon>
        <taxon>Rhabditidae</taxon>
        <taxon>Peloderinae</taxon>
        <taxon>Caenorhabditis</taxon>
    </lineage>
</organism>
<protein>
    <recommendedName>
        <fullName evidence="1">Probable 2-oxoadipate dehydrogenase complex component E1 homolog</fullName>
        <ecNumber evidence="1">1.2.4.-</ecNumber>
    </recommendedName>
</protein>
<reference key="1">
    <citation type="journal article" date="1998" name="Science">
        <title>Genome sequence of the nematode C. elegans: a platform for investigating biology.</title>
        <authorList>
            <consortium name="The C. elegans sequencing consortium"/>
        </authorList>
    </citation>
    <scope>NUCLEOTIDE SEQUENCE [LARGE SCALE GENOMIC DNA]</scope>
    <source>
        <strain>Bristol N2</strain>
    </source>
</reference>
<dbReference type="EC" id="1.2.4.-" evidence="1"/>
<dbReference type="EMBL" id="Z78201">
    <property type="protein sequence ID" value="CAB01590.2"/>
    <property type="molecule type" value="Genomic_DNA"/>
</dbReference>
<dbReference type="EMBL" id="Z78019">
    <property type="protein sequence ID" value="CAB01590.2"/>
    <property type="status" value="JOINED"/>
    <property type="molecule type" value="Genomic_DNA"/>
</dbReference>
<dbReference type="PIR" id="T28034">
    <property type="entry name" value="T28034"/>
</dbReference>
<dbReference type="RefSeq" id="NP_001256410.1">
    <property type="nucleotide sequence ID" value="NM_001269481.4"/>
</dbReference>
<dbReference type="SMR" id="Q23629"/>
<dbReference type="BioGRID" id="44697">
    <property type="interactions" value="1"/>
</dbReference>
<dbReference type="FunCoup" id="Q23629">
    <property type="interactions" value="1219"/>
</dbReference>
<dbReference type="STRING" id="6239.ZK836.2a.2"/>
<dbReference type="PaxDb" id="6239-ZK836.2a"/>
<dbReference type="PeptideAtlas" id="Q23629"/>
<dbReference type="EnsemblMetazoa" id="ZK836.2a.1">
    <property type="protein sequence ID" value="ZK836.2a.1"/>
    <property type="gene ID" value="WBGene00014098"/>
</dbReference>
<dbReference type="GeneID" id="179674"/>
<dbReference type="KEGG" id="cel:CELE_ZK836.2"/>
<dbReference type="UCSC" id="ZK836.2.1">
    <property type="organism name" value="c. elegans"/>
</dbReference>
<dbReference type="AGR" id="WB:WBGene00014098"/>
<dbReference type="CTD" id="179674"/>
<dbReference type="WormBase" id="ZK836.2a">
    <property type="protein sequence ID" value="CE35706"/>
    <property type="gene ID" value="WBGene00014098"/>
    <property type="gene designation" value="ogdh-2"/>
</dbReference>
<dbReference type="eggNOG" id="KOG0451">
    <property type="taxonomic scope" value="Eukaryota"/>
</dbReference>
<dbReference type="GeneTree" id="ENSGT00950000183125"/>
<dbReference type="InParanoid" id="Q23629"/>
<dbReference type="OMA" id="PAQYYHV"/>
<dbReference type="OrthoDB" id="413077at2759"/>
<dbReference type="PhylomeDB" id="Q23629"/>
<dbReference type="Reactome" id="R-CEL-9858328">
    <property type="pathway name" value="OADH complex synthesizes glutaryl-CoA from 2-OA"/>
</dbReference>
<dbReference type="PRO" id="PR:Q23629"/>
<dbReference type="Proteomes" id="UP000001940">
    <property type="component" value="Chromosome V"/>
</dbReference>
<dbReference type="Bgee" id="WBGene00014098">
    <property type="expression patterns" value="Expressed in germ line (C elegans) and 4 other cell types or tissues"/>
</dbReference>
<dbReference type="ExpressionAtlas" id="Q23629">
    <property type="expression patterns" value="baseline and differential"/>
</dbReference>
<dbReference type="GO" id="GO:0005739">
    <property type="term" value="C:mitochondrion"/>
    <property type="evidence" value="ECO:0007669"/>
    <property type="project" value="UniProtKB-SubCell"/>
</dbReference>
<dbReference type="GO" id="GO:0160166">
    <property type="term" value="F:2-oxoadipate dehydrogenase activity"/>
    <property type="evidence" value="ECO:0007669"/>
    <property type="project" value="RHEA"/>
</dbReference>
<dbReference type="GO" id="GO:0004591">
    <property type="term" value="F:oxoglutarate dehydrogenase (succinyl-transferring) activity"/>
    <property type="evidence" value="ECO:0007669"/>
    <property type="project" value="UniProtKB-EC"/>
</dbReference>
<dbReference type="GO" id="GO:0030976">
    <property type="term" value="F:thiamine pyrophosphate binding"/>
    <property type="evidence" value="ECO:0007669"/>
    <property type="project" value="InterPro"/>
</dbReference>
<dbReference type="GO" id="GO:0006096">
    <property type="term" value="P:glycolytic process"/>
    <property type="evidence" value="ECO:0007669"/>
    <property type="project" value="UniProtKB-KW"/>
</dbReference>
<dbReference type="CDD" id="cd02016">
    <property type="entry name" value="TPP_E1_OGDC_like"/>
    <property type="match status" value="1"/>
</dbReference>
<dbReference type="Gene3D" id="3.40.50.12470">
    <property type="match status" value="1"/>
</dbReference>
<dbReference type="Gene3D" id="3.40.50.970">
    <property type="match status" value="1"/>
</dbReference>
<dbReference type="Gene3D" id="3.40.50.11610">
    <property type="entry name" value="Multifunctional 2-oxoglutarate metabolism enzyme, C-terminal domain"/>
    <property type="match status" value="1"/>
</dbReference>
<dbReference type="Gene3D" id="1.10.287.1150">
    <property type="entry name" value="TPP helical domain"/>
    <property type="match status" value="1"/>
</dbReference>
<dbReference type="InterPro" id="IPR011603">
    <property type="entry name" value="2oxoglutarate_DH_E1"/>
</dbReference>
<dbReference type="InterPro" id="IPR001017">
    <property type="entry name" value="DH_E1"/>
</dbReference>
<dbReference type="InterPro" id="IPR042179">
    <property type="entry name" value="KGD_C_sf"/>
</dbReference>
<dbReference type="InterPro" id="IPR031717">
    <property type="entry name" value="ODO-1/KGD_C"/>
</dbReference>
<dbReference type="InterPro" id="IPR029061">
    <property type="entry name" value="THDP-binding"/>
</dbReference>
<dbReference type="InterPro" id="IPR005475">
    <property type="entry name" value="Transketolase-like_Pyr-bd"/>
</dbReference>
<dbReference type="NCBIfam" id="TIGR00239">
    <property type="entry name" value="2oxo_dh_E1"/>
    <property type="match status" value="1"/>
</dbReference>
<dbReference type="NCBIfam" id="NF006914">
    <property type="entry name" value="PRK09404.1"/>
    <property type="match status" value="1"/>
</dbReference>
<dbReference type="NCBIfam" id="NF008907">
    <property type="entry name" value="PRK12270.1"/>
    <property type="match status" value="1"/>
</dbReference>
<dbReference type="PANTHER" id="PTHR23152:SF4">
    <property type="entry name" value="2-OXOADIPATE DEHYDROGENASE COMPLEX COMPONENT E1"/>
    <property type="match status" value="1"/>
</dbReference>
<dbReference type="PANTHER" id="PTHR23152">
    <property type="entry name" value="2-OXOGLUTARATE DEHYDROGENASE"/>
    <property type="match status" value="1"/>
</dbReference>
<dbReference type="Pfam" id="PF00676">
    <property type="entry name" value="E1_dh"/>
    <property type="match status" value="1"/>
</dbReference>
<dbReference type="Pfam" id="PF16870">
    <property type="entry name" value="OxoGdeHyase_C"/>
    <property type="match status" value="1"/>
</dbReference>
<dbReference type="Pfam" id="PF02779">
    <property type="entry name" value="Transket_pyr"/>
    <property type="match status" value="1"/>
</dbReference>
<dbReference type="PIRSF" id="PIRSF000157">
    <property type="entry name" value="Oxoglu_dh_E1"/>
    <property type="match status" value="1"/>
</dbReference>
<dbReference type="SMART" id="SM00861">
    <property type="entry name" value="Transket_pyr"/>
    <property type="match status" value="1"/>
</dbReference>
<dbReference type="SUPFAM" id="SSF52518">
    <property type="entry name" value="Thiamin diphosphate-binding fold (THDP-binding)"/>
    <property type="match status" value="2"/>
</dbReference>
<name>DHTK1_CAEEL</name>